<proteinExistence type="evidence at protein level"/>
<name>HSF4_HUMAN</name>
<feature type="chain" id="PRO_0000124571" description="Heat shock factor protein 4">
    <location>
        <begin position="1"/>
        <end position="492"/>
    </location>
</feature>
<feature type="DNA-binding region" evidence="1">
    <location>
        <begin position="17"/>
        <end position="121"/>
    </location>
</feature>
<feature type="region of interest" description="Hydrophobic repeat HR-A/B">
    <location>
        <begin position="129"/>
        <end position="203"/>
    </location>
</feature>
<feature type="region of interest" description="Interactions with DUSP26, MAPK1 and MAPK2">
    <location>
        <begin position="245"/>
        <end position="322"/>
    </location>
</feature>
<feature type="region of interest" description="Disordered" evidence="4">
    <location>
        <begin position="246"/>
        <end position="285"/>
    </location>
</feature>
<feature type="region of interest" description="Disordered" evidence="4">
    <location>
        <begin position="337"/>
        <end position="400"/>
    </location>
</feature>
<feature type="region of interest" description="Hydrophobic repeat HR-C">
    <location>
        <begin position="364"/>
        <end position="389"/>
    </location>
</feature>
<feature type="compositionally biased region" description="Low complexity" evidence="4">
    <location>
        <begin position="374"/>
        <end position="388"/>
    </location>
</feature>
<feature type="modified residue" description="Phosphoserine" evidence="7">
    <location>
        <position position="298"/>
    </location>
</feature>
<feature type="cross-link" description="Glycyl lysine isopeptide (Lys-Gly) (interchain with G-Cter in SUMO)" evidence="7">
    <location>
        <position position="293"/>
    </location>
</feature>
<feature type="splice variant" id="VSP_002418" description="In isoform HSF4A." evidence="16">
    <original>LPETNLGLSPHRARGPIISDIPEDSPSPEGTRLSPSSDGRREKGLALLKEEPASPGGDGEAGLALAPNECDFCVT</original>
    <variation>STYSLSQRQIWALALTGPGAPSSLTSQKTLHPLRGPGFLPPVMAG</variation>
    <location>
        <begin position="245"/>
        <end position="319"/>
    </location>
</feature>
<feature type="sequence variant" id="VAR_017558" description="In CTRCT5; sporadic; decreased binding to the DNASE2B promoter and decreased DNASE2B expression; impaired RAD51 induction and UVC-induced DNA damage repair; dbSNP:rs121909049." evidence="6 11 13">
    <original>A</original>
    <variation>D</variation>
    <location>
        <position position="19"/>
    </location>
</feature>
<feature type="sequence variant" id="VAR_029018" description="In CTRCT5; decreased binding to the DNASE2B promoter and decreased DNASE2B expression; impaired RAD51 induction and UVC-induced DNA damage repair." evidence="9 11 13">
    <original>R</original>
    <variation>H</variation>
    <location>
        <position position="73"/>
    </location>
</feature>
<feature type="sequence variant" id="VAR_017559" description="In CTRCT5; sporadic; dbSNP:rs121909050." evidence="6">
    <original>I</original>
    <variation>V</variation>
    <location>
        <position position="86"/>
    </location>
</feature>
<feature type="sequence variant" id="VAR_017560" description="In CTRCT5; decreased binding to the DNASE2B promoter and decreased DNASE2B expression; impaired RAD51 induction; dbSNP:rs121909048." evidence="6 10 11 13">
    <original>L</original>
    <variation>P</variation>
    <location>
        <position position="114"/>
    </location>
</feature>
<feature type="sequence variant" id="VAR_017561" description="In CTRCT5; uncertain significance; decreased binding to the DNASE2B promoter and decreased DNASE2B expression; impaired RAD51 induction and UVC-induced DNA damage repair; dbSNP:rs28937573." evidence="6 10 11 13">
    <original>R</original>
    <variation>C</variation>
    <location>
        <position position="119"/>
    </location>
</feature>
<feature type="mutagenesis site" description="Abolishes sumoylation. 10-fold increased in transactivational activity." evidence="7">
    <original>K</original>
    <variation>R</variation>
    <location>
        <position position="293"/>
    </location>
</feature>
<feature type="mutagenesis site" description="Abolishes phosphorylation. Greatly reduced sumoylation. Greatly increased transactivational activity." evidence="7">
    <original>S</original>
    <variation>A</variation>
    <location>
        <position position="298"/>
    </location>
</feature>
<feature type="sequence conflict" description="In Ref. 1; BAA13433 and 2; BAA84582." evidence="17" ref="1 2">
    <original>M</original>
    <variation>MV</variation>
    <location>
        <position position="1"/>
    </location>
</feature>
<feature type="helix" evidence="18">
    <location>
        <begin position="19"/>
        <end position="29"/>
    </location>
</feature>
<feature type="helix" evidence="18">
    <location>
        <begin position="31"/>
        <end position="33"/>
    </location>
</feature>
<feature type="turn" evidence="18">
    <location>
        <begin position="34"/>
        <end position="36"/>
    </location>
</feature>
<feature type="strand" evidence="18">
    <location>
        <begin position="37"/>
        <end position="39"/>
    </location>
</feature>
<feature type="strand" evidence="18">
    <location>
        <begin position="43"/>
        <end position="49"/>
    </location>
</feature>
<feature type="helix" evidence="18">
    <location>
        <begin position="51"/>
        <end position="57"/>
    </location>
</feature>
<feature type="helix" evidence="18">
    <location>
        <begin position="59"/>
        <end position="63"/>
    </location>
</feature>
<feature type="helix" evidence="18">
    <location>
        <begin position="68"/>
        <end position="77"/>
    </location>
</feature>
<feature type="strand" evidence="19">
    <location>
        <begin position="81"/>
        <end position="85"/>
    </location>
</feature>
<feature type="strand" evidence="18">
    <location>
        <begin position="99"/>
        <end position="102"/>
    </location>
</feature>
<feature type="helix" evidence="18">
    <location>
        <begin position="113"/>
        <end position="116"/>
    </location>
</feature>
<gene>
    <name type="primary">HSF4</name>
</gene>
<comment type="function">
    <text evidence="2 3 11 13 14">Heat-shock transcription factor that specifically binds heat shock promoter elements (HSE) (PubMed:22587838, PubMed:23507146). Required for denucleation and organelle rupture and degradation that occur during eye lens terminal differentiation, when fiber cells that compose the lens degrade all membrane-bound organelles in order to provide lens with transparency to allow the passage of light (By similarity). In this process, may regulate denucleation of lens fiber cells in part by activating DNASE2B transcription (By similarity). May be involved in DNA repair through the transcriptional regulation of RAD51 (PubMed:22587838). May up-regulate p53/TP53 protein in eye lens fiber cells, possibly through protein stabilization (PubMed:28981088). In the eye lens, controls the expression of alpha-crystallin B chain/CRYAB and consequently may be involved in the regulation of lysosomal acidification (By similarity).</text>
</comment>
<comment type="function">
    <molecule>Isoform HSF4A</molecule>
    <text evidence="5">Transcriptional repressor.</text>
</comment>
<comment type="function">
    <molecule>Isoform HSF4B</molecule>
    <text evidence="5 7">Transcriptional activator.</text>
</comment>
<comment type="subunit">
    <text evidence="3 8 12">Homotrimer (By similarity). Exhibits constitutive DNA binding and forms trimers even in the absence of stress (By similarity). Interacts with ALKBH4, DUSP26, MAPK1, MAPK2, MAPK8 and MAP kinase p38 (PubMed:16581800, PubMed:23145062).</text>
</comment>
<comment type="interaction">
    <interactant intactId="EBI-12056251">
        <id>Q9ULV5-2</id>
    </interactant>
    <interactant intactId="EBI-11976299">
        <id>Q5BKX5-3</id>
        <label>ACTMAP</label>
    </interactant>
    <organismsDiffer>false</organismsDiffer>
    <experiments>3</experiments>
</comment>
<comment type="interaction">
    <interactant intactId="EBI-12056251">
        <id>Q9ULV5-2</id>
    </interactant>
    <interactant intactId="EBI-357530">
        <id>Q9ULX6</id>
        <label>AKAP8L</label>
    </interactant>
    <organismsDiffer>false</organismsDiffer>
    <experiments>3</experiments>
</comment>
<comment type="interaction">
    <interactant intactId="EBI-12056251">
        <id>Q9ULV5-2</id>
    </interactant>
    <interactant intactId="EBI-12809220">
        <id>Q5SWW7</id>
        <label>C10orf55</label>
    </interactant>
    <organismsDiffer>false</organismsDiffer>
    <experiments>3</experiments>
</comment>
<comment type="interaction">
    <interactant intactId="EBI-12056251">
        <id>Q9ULV5-2</id>
    </interactant>
    <interactant intactId="EBI-12193763">
        <id>A1KXE4-2</id>
        <label>FAM168B</label>
    </interactant>
    <organismsDiffer>false</organismsDiffer>
    <experiments>3</experiments>
</comment>
<comment type="interaction">
    <interactant intactId="EBI-12056251">
        <id>Q9ULV5-2</id>
    </interactant>
    <interactant intactId="EBI-1759806">
        <id>O75593</id>
        <label>FOXH1</label>
    </interactant>
    <organismsDiffer>false</organismsDiffer>
    <experiments>3</experiments>
</comment>
<comment type="interaction">
    <interactant intactId="EBI-12056251">
        <id>Q9ULV5-2</id>
    </interactant>
    <interactant intactId="EBI-12018822">
        <id>Q12951-2</id>
        <label>FOXI1</label>
    </interactant>
    <organismsDiffer>false</organismsDiffer>
    <experiments>3</experiments>
</comment>
<comment type="interaction">
    <interactant intactId="EBI-12056251">
        <id>Q9ULV5-2</id>
    </interactant>
    <interactant intactId="EBI-8799578">
        <id>Q9NXC2</id>
        <label>GFOD1</label>
    </interactant>
    <organismsDiffer>false</organismsDiffer>
    <experiments>3</experiments>
</comment>
<comment type="interaction">
    <interactant intactId="EBI-12056251">
        <id>Q9ULV5-2</id>
    </interactant>
    <interactant intactId="EBI-740220">
        <id>O14964</id>
        <label>HGS</label>
    </interactant>
    <organismsDiffer>false</organismsDiffer>
    <experiments>3</experiments>
</comment>
<comment type="interaction">
    <interactant intactId="EBI-12056251">
        <id>Q9ULV5-2</id>
    </interactant>
    <interactant intactId="EBI-748258">
        <id>Q5TA45</id>
        <label>INTS11</label>
    </interactant>
    <organismsDiffer>false</organismsDiffer>
    <experiments>3</experiments>
</comment>
<comment type="interaction">
    <interactant intactId="EBI-12056251">
        <id>Q9ULV5-2</id>
    </interactant>
    <interactant intactId="EBI-948001">
        <id>Q15323</id>
        <label>KRT31</label>
    </interactant>
    <organismsDiffer>false</organismsDiffer>
    <experiments>3</experiments>
</comment>
<comment type="interaction">
    <interactant intactId="EBI-12056251">
        <id>Q9ULV5-2</id>
    </interactant>
    <interactant intactId="EBI-1045716">
        <id>O76014</id>
        <label>KRT37</label>
    </interactant>
    <organismsDiffer>false</organismsDiffer>
    <experiments>3</experiments>
</comment>
<comment type="interaction">
    <interactant intactId="EBI-12056251">
        <id>Q9ULV5-2</id>
    </interactant>
    <interactant intactId="EBI-1047263">
        <id>O76015</id>
        <label>KRT38</label>
    </interactant>
    <organismsDiffer>false</organismsDiffer>
    <experiments>3</experiments>
</comment>
<comment type="interaction">
    <interactant intactId="EBI-12056251">
        <id>Q9ULV5-2</id>
    </interactant>
    <interactant intactId="EBI-10171697">
        <id>Q6A162</id>
        <label>KRT40</label>
    </interactant>
    <organismsDiffer>false</organismsDiffer>
    <experiments>3</experiments>
</comment>
<comment type="interaction">
    <interactant intactId="EBI-12056251">
        <id>Q9ULV5-2</id>
    </interactant>
    <interactant intactId="EBI-12805508">
        <id>Q3LI70</id>
        <label>KRTAP19-6</label>
    </interactant>
    <organismsDiffer>false</organismsDiffer>
    <experiments>3</experiments>
</comment>
<comment type="interaction">
    <interactant intactId="EBI-12056251">
        <id>Q9ULV5-2</id>
    </interactant>
    <interactant intactId="EBI-10241353">
        <id>Q3SYF9</id>
        <label>KRTAP19-7</label>
    </interactant>
    <organismsDiffer>false</organismsDiffer>
    <experiments>3</experiments>
</comment>
<comment type="interaction">
    <interactant intactId="EBI-12056251">
        <id>Q9ULV5-2</id>
    </interactant>
    <interactant intactId="EBI-9996449">
        <id>Q9BYR8</id>
        <label>KRTAP3-1</label>
    </interactant>
    <organismsDiffer>false</organismsDiffer>
    <experiments>3</experiments>
</comment>
<comment type="interaction">
    <interactant intactId="EBI-12056251">
        <id>Q9ULV5-2</id>
    </interactant>
    <interactant intactId="EBI-11962084">
        <id>Q3LI66</id>
        <label>KRTAP6-2</label>
    </interactant>
    <organismsDiffer>false</organismsDiffer>
    <experiments>3</experiments>
</comment>
<comment type="interaction">
    <interactant intactId="EBI-12056251">
        <id>Q9ULV5-2</id>
    </interactant>
    <interactant intactId="EBI-2340269">
        <id>Q13064</id>
        <label>MKRN3</label>
    </interactant>
    <organismsDiffer>false</organismsDiffer>
    <experiments>3</experiments>
</comment>
<comment type="interaction">
    <interactant intactId="EBI-12056251">
        <id>Q9ULV5-2</id>
    </interactant>
    <interactant intactId="EBI-12868744">
        <id>P0CG21</id>
        <label>NHLRC4</label>
    </interactant>
    <organismsDiffer>false</organismsDiffer>
    <experiments>3</experiments>
</comment>
<comment type="interaction">
    <interactant intactId="EBI-12056251">
        <id>Q9ULV5-2</id>
    </interactant>
    <interactant intactId="EBI-347978">
        <id>P37198</id>
        <label>NUP62</label>
    </interactant>
    <organismsDiffer>false</organismsDiffer>
    <experiments>3</experiments>
</comment>
<comment type="interaction">
    <interactant intactId="EBI-12056251">
        <id>Q9ULV5-2</id>
    </interactant>
    <interactant intactId="EBI-536879">
        <id>O43482</id>
        <label>OIP5</label>
    </interactant>
    <organismsDiffer>false</organismsDiffer>
    <experiments>5</experiments>
</comment>
<comment type="interaction">
    <interactant intactId="EBI-12056251">
        <id>Q9ULV5-2</id>
    </interactant>
    <interactant intactId="EBI-10232538">
        <id>Q8WWB5</id>
        <label>PIH1D2</label>
    </interactant>
    <organismsDiffer>false</organismsDiffer>
    <experiments>3</experiments>
</comment>
<comment type="interaction">
    <interactant intactId="EBI-12056251">
        <id>Q9ULV5-2</id>
    </interactant>
    <interactant intactId="EBI-748265">
        <id>P78337</id>
        <label>PITX1</label>
    </interactant>
    <organismsDiffer>false</organismsDiffer>
    <experiments>3</experiments>
</comment>
<comment type="interaction">
    <interactant intactId="EBI-12056251">
        <id>Q9ULV5-2</id>
    </interactant>
    <interactant intactId="EBI-726466">
        <id>O15496</id>
        <label>PLA2G10</label>
    </interactant>
    <organismsDiffer>false</organismsDiffer>
    <experiments>3</experiments>
</comment>
<comment type="interaction">
    <interactant intactId="EBI-12056251">
        <id>Q9ULV5-2</id>
    </interactant>
    <interactant intactId="EBI-744056">
        <id>Q8ND30</id>
        <label>PPFIBP2</label>
    </interactant>
    <organismsDiffer>false</organismsDiffer>
    <experiments>3</experiments>
</comment>
<comment type="interaction">
    <interactant intactId="EBI-12056251">
        <id>Q9ULV5-2</id>
    </interactant>
    <interactant intactId="EBI-6117072">
        <id>Q86VW0</id>
        <label>SESTD1</label>
    </interactant>
    <organismsDiffer>false</organismsDiffer>
    <experiments>3</experiments>
</comment>
<comment type="interaction">
    <interactant intactId="EBI-12056251">
        <id>Q9ULV5-2</id>
    </interactant>
    <interactant intactId="EBI-1167533">
        <id>P56693</id>
        <label>SOX10</label>
    </interactant>
    <organismsDiffer>false</organismsDiffer>
    <experiments>3</experiments>
</comment>
<comment type="interaction">
    <interactant intactId="EBI-12056251">
        <id>Q9ULV5-2</id>
    </interactant>
    <interactant intactId="EBI-355607">
        <id>P06753</id>
        <label>TPM3</label>
    </interactant>
    <organismsDiffer>false</organismsDiffer>
    <experiments>3</experiments>
</comment>
<comment type="interaction">
    <interactant intactId="EBI-12056251">
        <id>Q9ULV5-2</id>
    </interactant>
    <interactant intactId="EBI-12068150">
        <id>Q6NVU6</id>
        <label>UFSP1</label>
    </interactant>
    <organismsDiffer>false</organismsDiffer>
    <experiments>3</experiments>
</comment>
<comment type="interaction">
    <interactant intactId="EBI-12056251">
        <id>Q9ULV5-2</id>
    </interactant>
    <interactant intactId="EBI-1051237">
        <id>Q9BYJ9</id>
        <label>YTHDF1</label>
    </interactant>
    <organismsDiffer>false</organismsDiffer>
    <experiments>3</experiments>
</comment>
<comment type="interaction">
    <interactant intactId="EBI-12056251">
        <id>Q9ULV5-2</id>
    </interactant>
    <interactant intactId="EBI-12030590">
        <id>Q9H0C1</id>
        <label>ZMYND12</label>
    </interactant>
    <organismsDiffer>false</organismsDiffer>
    <experiments>3</experiments>
</comment>
<comment type="subcellular location">
    <subcellularLocation>
        <location evidence="5">Nucleus</location>
    </subcellularLocation>
</comment>
<comment type="alternative products">
    <event type="alternative splicing"/>
    <isoform>
        <id>Q9ULV5-1</id>
        <name evidence="15">HSF4B</name>
        <sequence type="displayed"/>
    </isoform>
    <isoform>
        <id>Q9ULV5-2</id>
        <name evidence="15">HSF4A</name>
        <sequence type="described" ref="VSP_002418"/>
    </isoform>
</comment>
<comment type="tissue specificity">
    <text evidence="6">Expressed in heart, skeletal muscle, eye and brain, and at much lower levels in some other tissues.</text>
</comment>
<comment type="PTM">
    <text evidence="7">Phosphorylated mainly on serine residues. Phosphorylation on Ser-298 promotes sumoylation on Lys-293.</text>
</comment>
<comment type="PTM">
    <text evidence="7">Isoform HSF4B is constitutively sumoylated. Sumoylation represses the transcriptional activity and is promoted by phosphorylation on Ser-298. HSFA is not sumoylated.</text>
</comment>
<comment type="disease" evidence="6 9 10 11 13">
    <disease id="DI-02507">
        <name>Cataract 5, multiple types</name>
        <acronym>CTRCT5</acronym>
        <description>An opacification of the crystalline lens of the eye that frequently results in visual impairment or blindness. Opacities vary in morphology, are often confined to a portion of the lens, and may be static or progressive. CTRCT5 includes infantile, lamellar, zonular, nuclear, anterior polar, stellate, and Marner-type cataracts, among others. Finger malformation is observed in some kindreds.</description>
        <dbReference type="MIM" id="116800"/>
    </disease>
    <text>The disease is caused by variants affecting the gene represented in this entry.</text>
</comment>
<comment type="similarity">
    <text evidence="17">Belongs to the HSF family.</text>
</comment>
<comment type="online information" name="Eye disease Heat shock transcription factor 4 (HSF4)">
    <link uri="https://databases.lovd.nl/shared/genes/HSF4"/>
    <text>Leiden Open Variation Database (LOVD)</text>
</comment>
<reference key="1">
    <citation type="journal article" date="1997" name="Mol. Cell. Biol.">
        <title>HSF4, a new member of the human heat shock factor family which lacks properties of a transcriptional activator.</title>
        <authorList>
            <person name="Nakai A."/>
            <person name="Tanabe M."/>
            <person name="Kawazoe Y."/>
            <person name="Inazawa J."/>
            <person name="Morimoto R.I."/>
            <person name="Nagata K."/>
        </authorList>
    </citation>
    <scope>NUCLEOTIDE SEQUENCE [MRNA] (ISOFORM HSF4A)</scope>
    <source>
        <tissue>Heart</tissue>
    </source>
</reference>
<reference key="2">
    <citation type="journal article" date="1999" name="J. Biol. Chem.">
        <title>The mammalian HSF4 gene generates both an activator and a repressor of heat shock genes by alternative splicing.</title>
        <authorList>
            <person name="Tanabe M."/>
            <person name="Sasai N."/>
            <person name="Nagata K."/>
            <person name="Liu X.-D."/>
            <person name="Liu P.C.C."/>
            <person name="Thiele D.J."/>
            <person name="Nakai A."/>
        </authorList>
    </citation>
    <scope>NUCLEOTIDE SEQUENCE [MRNA] (ISOFORM HSF4B)</scope>
    <scope>NUCLEOTIDE SEQUENCE [GENOMIC DNA] OF 1-396 (ISOFORM HSF4A)</scope>
    <scope>FUNCTION</scope>
    <scope>SUBCELLULAR LOCATION</scope>
    <scope>ALTERNATIVE SPLICING</scope>
</reference>
<reference key="3">
    <citation type="journal article" date="2004" name="Nature">
        <title>The sequence and analysis of duplication-rich human chromosome 16.</title>
        <authorList>
            <person name="Martin J."/>
            <person name="Han C."/>
            <person name="Gordon L.A."/>
            <person name="Terry A."/>
            <person name="Prabhakar S."/>
            <person name="She X."/>
            <person name="Xie G."/>
            <person name="Hellsten U."/>
            <person name="Chan Y.M."/>
            <person name="Altherr M."/>
            <person name="Couronne O."/>
            <person name="Aerts A."/>
            <person name="Bajorek E."/>
            <person name="Black S."/>
            <person name="Blumer H."/>
            <person name="Branscomb E."/>
            <person name="Brown N.C."/>
            <person name="Bruno W.J."/>
            <person name="Buckingham J.M."/>
            <person name="Callen D.F."/>
            <person name="Campbell C.S."/>
            <person name="Campbell M.L."/>
            <person name="Campbell E.W."/>
            <person name="Caoile C."/>
            <person name="Challacombe J.F."/>
            <person name="Chasteen L.A."/>
            <person name="Chertkov O."/>
            <person name="Chi H.C."/>
            <person name="Christensen M."/>
            <person name="Clark L.M."/>
            <person name="Cohn J.D."/>
            <person name="Denys M."/>
            <person name="Detter J.C."/>
            <person name="Dickson M."/>
            <person name="Dimitrijevic-Bussod M."/>
            <person name="Escobar J."/>
            <person name="Fawcett J.J."/>
            <person name="Flowers D."/>
            <person name="Fotopulos D."/>
            <person name="Glavina T."/>
            <person name="Gomez M."/>
            <person name="Gonzales E."/>
            <person name="Goodstein D."/>
            <person name="Goodwin L.A."/>
            <person name="Grady D.L."/>
            <person name="Grigoriev I."/>
            <person name="Groza M."/>
            <person name="Hammon N."/>
            <person name="Hawkins T."/>
            <person name="Haydu L."/>
            <person name="Hildebrand C.E."/>
            <person name="Huang W."/>
            <person name="Israni S."/>
            <person name="Jett J."/>
            <person name="Jewett P.B."/>
            <person name="Kadner K."/>
            <person name="Kimball H."/>
            <person name="Kobayashi A."/>
            <person name="Krawczyk M.-C."/>
            <person name="Leyba T."/>
            <person name="Longmire J.L."/>
            <person name="Lopez F."/>
            <person name="Lou Y."/>
            <person name="Lowry S."/>
            <person name="Ludeman T."/>
            <person name="Manohar C.F."/>
            <person name="Mark G.A."/>
            <person name="McMurray K.L."/>
            <person name="Meincke L.J."/>
            <person name="Morgan J."/>
            <person name="Moyzis R.K."/>
            <person name="Mundt M.O."/>
            <person name="Munk A.C."/>
            <person name="Nandkeshwar R.D."/>
            <person name="Pitluck S."/>
            <person name="Pollard M."/>
            <person name="Predki P."/>
            <person name="Parson-Quintana B."/>
            <person name="Ramirez L."/>
            <person name="Rash S."/>
            <person name="Retterer J."/>
            <person name="Ricke D.O."/>
            <person name="Robinson D.L."/>
            <person name="Rodriguez A."/>
            <person name="Salamov A."/>
            <person name="Saunders E.H."/>
            <person name="Scott D."/>
            <person name="Shough T."/>
            <person name="Stallings R.L."/>
            <person name="Stalvey M."/>
            <person name="Sutherland R.D."/>
            <person name="Tapia R."/>
            <person name="Tesmer J.G."/>
            <person name="Thayer N."/>
            <person name="Thompson L.S."/>
            <person name="Tice H."/>
            <person name="Torney D.C."/>
            <person name="Tran-Gyamfi M."/>
            <person name="Tsai M."/>
            <person name="Ulanovsky L.E."/>
            <person name="Ustaszewska A."/>
            <person name="Vo N."/>
            <person name="White P.S."/>
            <person name="Williams A.L."/>
            <person name="Wills P.L."/>
            <person name="Wu J.-R."/>
            <person name="Wu K."/>
            <person name="Yang J."/>
            <person name="DeJong P."/>
            <person name="Bruce D."/>
            <person name="Doggett N.A."/>
            <person name="Deaven L."/>
            <person name="Schmutz J."/>
            <person name="Grimwood J."/>
            <person name="Richardson P."/>
            <person name="Rokhsar D.S."/>
            <person name="Eichler E.E."/>
            <person name="Gilna P."/>
            <person name="Lucas S.M."/>
            <person name="Myers R.M."/>
            <person name="Rubin E.M."/>
            <person name="Pennacchio L.A."/>
        </authorList>
    </citation>
    <scope>NUCLEOTIDE SEQUENCE [LARGE SCALE GENOMIC DNA]</scope>
</reference>
<reference key="4">
    <citation type="journal article" date="2006" name="Mol. Cell. Biol.">
        <title>Association and regulation of heat shock transcription factor 4b with both extracellular signal-regulated kinase mitogen-activated protein kinase and dual-specificity tyrosine phosphatase DUSP26.</title>
        <authorList>
            <person name="Hu Y."/>
            <person name="Mivechi N.F."/>
        </authorList>
    </citation>
    <scope>INTERACTION WITH DUSP26; MAPK1; MAPK2; MAPK8 AND MAP KINASE P38</scope>
    <scope>PTM</scope>
</reference>
<reference key="5">
    <citation type="journal article" date="2006" name="Proc. Natl. Acad. Sci. U.S.A.">
        <title>PDSM, a motif for phosphorylation-dependent SUMO modification.</title>
        <authorList>
            <person name="Hietakangas V."/>
            <person name="Anckar J."/>
            <person name="Blomster H.A."/>
            <person name="Fujimoto M."/>
            <person name="Palvimo J.J."/>
            <person name="Nakai A."/>
            <person name="Sistonen L."/>
        </authorList>
    </citation>
    <scope>SUMOYLATION AT LYS-293</scope>
    <scope>PHOSPHORYLATION AT SER-298</scope>
    <scope>FUNCTION</scope>
    <scope>MUTAGENESIS OF LYS-293 AND SER-298</scope>
</reference>
<reference key="6">
    <citation type="journal article" date="2012" name="Biochim. Biophys. Acta">
        <title>HSF4 is involved in DNA damage repair through regulation of Rad51.</title>
        <authorList>
            <person name="Cui X."/>
            <person name="Zhang J."/>
            <person name="Du R."/>
            <person name="Wang L."/>
            <person name="Archacki S."/>
            <person name="Zhang Y."/>
            <person name="Yuan M."/>
            <person name="Ke T."/>
            <person name="Li H."/>
            <person name="Li D."/>
            <person name="Li C."/>
            <person name="Li D.W."/>
            <person name="Tang Z."/>
            <person name="Yin Z."/>
            <person name="Liu M."/>
        </authorList>
    </citation>
    <scope>FUNCTION</scope>
    <scope>CHARACTERIZATION OF VARIANTS CTRCT5 ASP-19; VAL-86; PRO-114 AND CYS-119</scope>
</reference>
<reference key="7">
    <citation type="journal article" date="2012" name="PLoS ONE">
        <title>Human ALKBH4 interacts with proteins associated with transcription.</title>
        <authorList>
            <person name="Bjornstad L.G."/>
            <person name="Meza T.J."/>
            <person name="Otterlei M."/>
            <person name="Olafsrud S.M."/>
            <person name="Meza-Zepeda L.A."/>
            <person name="Falnes P.O."/>
        </authorList>
    </citation>
    <scope>INTERACTION WITH ALKBH4</scope>
</reference>
<reference key="8">
    <citation type="journal article" date="2013" name="Biochim. Biophys. Acta">
        <title>HSF4 regulates DLAD expression and promotes lens de-nucleation.</title>
        <authorList>
            <person name="Cui X."/>
            <person name="Wang L."/>
            <person name="Zhang J."/>
            <person name="Du R."/>
            <person name="Liao S."/>
            <person name="Li D."/>
            <person name="Li C."/>
            <person name="Ke T."/>
            <person name="Li D.W."/>
            <person name="Huang H."/>
            <person name="Yin Z."/>
            <person name="Tang Z."/>
            <person name="Liu M."/>
        </authorList>
    </citation>
    <scope>FUNCTION</scope>
    <scope>CHARACTERIZATION OF VARIANTS CTRCT5 ASP-19; VAL-86; PRO-114 AND CYS-119</scope>
</reference>
<reference key="9">
    <citation type="journal article" date="2017" name="Cell Death Dis.">
        <title>HSF4 regulates lens fiber cell differentiation by activating p53 and its downstream regulators.</title>
        <authorList>
            <person name="Gao M."/>
            <person name="Huang Y."/>
            <person name="Wang L."/>
            <person name="Huang M."/>
            <person name="Liu F."/>
            <person name="Liao S."/>
            <person name="Yu S."/>
            <person name="Lu Z."/>
            <person name="Han S."/>
            <person name="Hu X."/>
            <person name="Qu Z."/>
            <person name="Liu X."/>
            <person name="Assefa Yimer T."/>
            <person name="Yang L."/>
            <person name="Tang Z."/>
            <person name="Li D.W."/>
            <person name="Liu M."/>
        </authorList>
    </citation>
    <scope>FUNCTION</scope>
</reference>
<reference key="10">
    <citation type="journal article" date="2002" name="Nat. Genet.">
        <title>Mutant DNA-binding domain of HSF4 is associated with autosomal dominant lamellar and Marner cataract.</title>
        <authorList>
            <person name="Bu L."/>
            <person name="Jin Y."/>
            <person name="Shi Y."/>
            <person name="Chu R."/>
            <person name="Ban A."/>
            <person name="Eiberg H."/>
            <person name="Andres L."/>
            <person name="Jiang H."/>
            <person name="Zheng G."/>
            <person name="Qian M."/>
            <person name="Cui B."/>
            <person name="Xia Y."/>
            <person name="Liu J."/>
            <person name="Hu L."/>
            <person name="Zhao G."/>
            <person name="Hayden M.R."/>
            <person name="Kong X."/>
        </authorList>
    </citation>
    <scope>VARIANTS CTRCT5 ASP-19; VAL-86; PRO-114 AND CYS-119</scope>
    <scope>TISSUE SPECIFICITY</scope>
</reference>
<reference key="11">
    <citation type="journal article" date="2006" name="Am. J. Ophthalmol.">
        <title>Novel HSF4 mutation causes congenital total white cataract in a Chinese family.</title>
        <authorList>
            <person name="Ke T."/>
            <person name="Wang Q.K."/>
            <person name="Ji B."/>
            <person name="Wang X."/>
            <person name="Liu P."/>
            <person name="Zhang X."/>
            <person name="Tang Z."/>
            <person name="Ren X."/>
            <person name="Liu M."/>
        </authorList>
    </citation>
    <scope>VARIANT CTRCT5 HIS-73</scope>
</reference>
<reference key="12">
    <citation type="journal article" date="2009" name="Invest. Ophthalmol. Vis. Sci.">
        <title>Comprehensive mutational screening in a cohort of Danish families with hereditary congenital cataract.</title>
        <authorList>
            <person name="Hansen L."/>
            <person name="Mikkelsen A."/>
            <person name="Nuernberg P."/>
            <person name="Nuernberg G."/>
            <person name="Anjum I."/>
            <person name="Eiberg H."/>
            <person name="Rosenberg T."/>
        </authorList>
    </citation>
    <scope>VARIANTS CTRCT5 PRO-114 AND CYS-119</scope>
</reference>
<keyword id="KW-0002">3D-structure</keyword>
<keyword id="KW-0010">Activator</keyword>
<keyword id="KW-0025">Alternative splicing</keyword>
<keyword id="KW-0898">Cataract</keyword>
<keyword id="KW-0225">Disease variant</keyword>
<keyword id="KW-0238">DNA-binding</keyword>
<keyword id="KW-1017">Isopeptide bond</keyword>
<keyword id="KW-0539">Nucleus</keyword>
<keyword id="KW-0597">Phosphoprotein</keyword>
<keyword id="KW-1267">Proteomics identification</keyword>
<keyword id="KW-1185">Reference proteome</keyword>
<keyword id="KW-0678">Repressor</keyword>
<keyword id="KW-0346">Stress response</keyword>
<keyword id="KW-0804">Transcription</keyword>
<keyword id="KW-0805">Transcription regulation</keyword>
<keyword id="KW-0832">Ubl conjugation</keyword>
<organism>
    <name type="scientific">Homo sapiens</name>
    <name type="common">Human</name>
    <dbReference type="NCBI Taxonomy" id="9606"/>
    <lineage>
        <taxon>Eukaryota</taxon>
        <taxon>Metazoa</taxon>
        <taxon>Chordata</taxon>
        <taxon>Craniata</taxon>
        <taxon>Vertebrata</taxon>
        <taxon>Euteleostomi</taxon>
        <taxon>Mammalia</taxon>
        <taxon>Eutheria</taxon>
        <taxon>Euarchontoglires</taxon>
        <taxon>Primates</taxon>
        <taxon>Haplorrhini</taxon>
        <taxon>Catarrhini</taxon>
        <taxon>Hominidae</taxon>
        <taxon>Homo</taxon>
    </lineage>
</organism>
<evidence type="ECO:0000250" key="1"/>
<evidence type="ECO:0000250" key="2">
    <source>
        <dbReference type="UniProtKB" id="Q5CZP2"/>
    </source>
</evidence>
<evidence type="ECO:0000250" key="3">
    <source>
        <dbReference type="UniProtKB" id="Q9R0L1"/>
    </source>
</evidence>
<evidence type="ECO:0000256" key="4">
    <source>
        <dbReference type="SAM" id="MobiDB-lite"/>
    </source>
</evidence>
<evidence type="ECO:0000269" key="5">
    <source>
    </source>
</evidence>
<evidence type="ECO:0000269" key="6">
    <source>
    </source>
</evidence>
<evidence type="ECO:0000269" key="7">
    <source>
    </source>
</evidence>
<evidence type="ECO:0000269" key="8">
    <source>
    </source>
</evidence>
<evidence type="ECO:0000269" key="9">
    <source>
    </source>
</evidence>
<evidence type="ECO:0000269" key="10">
    <source>
    </source>
</evidence>
<evidence type="ECO:0000269" key="11">
    <source>
    </source>
</evidence>
<evidence type="ECO:0000269" key="12">
    <source>
    </source>
</evidence>
<evidence type="ECO:0000269" key="13">
    <source>
    </source>
</evidence>
<evidence type="ECO:0000269" key="14">
    <source>
    </source>
</evidence>
<evidence type="ECO:0000303" key="15">
    <source>
    </source>
</evidence>
<evidence type="ECO:0000303" key="16">
    <source>
    </source>
</evidence>
<evidence type="ECO:0000305" key="17"/>
<evidence type="ECO:0007829" key="18">
    <source>
        <dbReference type="PDB" id="6J6V"/>
    </source>
</evidence>
<evidence type="ECO:0007829" key="19">
    <source>
        <dbReference type="PDB" id="6J6W"/>
    </source>
</evidence>
<sequence length="492" mass="53011">MQEAPAALPTEPGPSPVPAFLGKLWALVGDPGTDHLIRWSPSGTSFLVSDQSRFAKEVLPQYFKHSNMASFVRQLNMYGFRKVVSIEQGGLLRPERDHVEFQHPSFVRGREQLLERVRRKVPALRGDDGRWRPEDLGRLLGEVQALRGVQESTEARLRELRQQNEILWREVVTLRQSHGQQHRVIGKLIQCLFGPLQAGPSNAGGKRKLSLMLDEGSSCPTPAKFNTCPLPGALLQDPYFIQSPLPETNLGLSPHRARGPIISDIPEDSPSPEGTRLSPSSDGRREKGLALLKEEPASPGGDGEAGLALAPNECDFCVTAPPPLPVAVVQAILEGKGSFSPEGPRNAQQPEPGDPREIPDRGPLGLESGDRSPESLLPPMLLQPPQESVEPAGPLDVLGPSLQGREWTLMDLDMELSLMQPLVPERGEPELAVKGLNSPSPGKDPTLGAPLLLDVQAALGGPALGLPGALTIYSTPESRTASYLGPEASPSP</sequence>
<dbReference type="EMBL" id="D87673">
    <property type="protein sequence ID" value="BAA13433.1"/>
    <property type="molecule type" value="mRNA"/>
</dbReference>
<dbReference type="EMBL" id="AB029347">
    <property type="protein sequence ID" value="BAA84581.1"/>
    <property type="molecule type" value="Genomic_DNA"/>
</dbReference>
<dbReference type="EMBL" id="AB029348">
    <property type="protein sequence ID" value="BAA84582.1"/>
    <property type="molecule type" value="mRNA"/>
</dbReference>
<dbReference type="EMBL" id="AC074143">
    <property type="status" value="NOT_ANNOTATED_CDS"/>
    <property type="molecule type" value="Genomic_DNA"/>
</dbReference>
<dbReference type="CCDS" id="CCDS42175.1">
    <molecule id="Q9ULV5-1"/>
</dbReference>
<dbReference type="CCDS" id="CCDS45510.1">
    <molecule id="Q9ULV5-2"/>
</dbReference>
<dbReference type="RefSeq" id="NP_001035757.1">
    <molecule id="Q9ULV5-1"/>
    <property type="nucleotide sequence ID" value="NM_001040667.3"/>
</dbReference>
<dbReference type="RefSeq" id="NP_001361603.1">
    <molecule id="Q9ULV5-2"/>
    <property type="nucleotide sequence ID" value="NM_001374674.1"/>
</dbReference>
<dbReference type="RefSeq" id="NP_001361604.1">
    <molecule id="Q9ULV5-1"/>
    <property type="nucleotide sequence ID" value="NM_001374675.1"/>
</dbReference>
<dbReference type="RefSeq" id="NP_001529.2">
    <molecule id="Q9ULV5-2"/>
    <property type="nucleotide sequence ID" value="NM_001538.4"/>
</dbReference>
<dbReference type="PDB" id="6J6V">
    <property type="method" value="X-ray"/>
    <property type="resolution" value="1.20 A"/>
    <property type="chains" value="A=17-121"/>
</dbReference>
<dbReference type="PDB" id="6J6W">
    <property type="method" value="X-ray"/>
    <property type="resolution" value="1.69 A"/>
    <property type="chains" value="A/B=17-121"/>
</dbReference>
<dbReference type="PDBsum" id="6J6V"/>
<dbReference type="PDBsum" id="6J6W"/>
<dbReference type="SMR" id="Q9ULV5"/>
<dbReference type="BioGRID" id="109532">
    <property type="interactions" value="61"/>
</dbReference>
<dbReference type="ELM" id="Q9ULV5"/>
<dbReference type="FunCoup" id="Q9ULV5">
    <property type="interactions" value="665"/>
</dbReference>
<dbReference type="IntAct" id="Q9ULV5">
    <property type="interactions" value="45"/>
</dbReference>
<dbReference type="MINT" id="Q9ULV5"/>
<dbReference type="STRING" id="9606.ENSP00000430947"/>
<dbReference type="ChEMBL" id="CHEMBL3988631"/>
<dbReference type="GlyGen" id="Q9ULV5">
    <property type="glycosylation" value="4 sites, 1 O-linked glycan (2 sites)"/>
</dbReference>
<dbReference type="iPTMnet" id="Q9ULV5"/>
<dbReference type="PhosphoSitePlus" id="Q9ULV5"/>
<dbReference type="BioMuta" id="HSF4"/>
<dbReference type="DMDM" id="296434534"/>
<dbReference type="jPOST" id="Q9ULV5"/>
<dbReference type="MassIVE" id="Q9ULV5"/>
<dbReference type="PaxDb" id="9606-ENSP00000264009"/>
<dbReference type="PeptideAtlas" id="Q9ULV5"/>
<dbReference type="ProteomicsDB" id="85135">
    <molecule id="Q9ULV5-1"/>
</dbReference>
<dbReference type="ProteomicsDB" id="85136">
    <molecule id="Q9ULV5-2"/>
</dbReference>
<dbReference type="Antibodypedia" id="29424">
    <property type="antibodies" value="328 antibodies from 31 providers"/>
</dbReference>
<dbReference type="DNASU" id="3299"/>
<dbReference type="Ensembl" id="ENST00000521374.6">
    <molecule id="Q9ULV5-1"/>
    <property type="protein sequence ID" value="ENSP00000430947.2"/>
    <property type="gene ID" value="ENSG00000102878.18"/>
</dbReference>
<dbReference type="Ensembl" id="ENST00000584272.5">
    <molecule id="Q9ULV5-2"/>
    <property type="protein sequence ID" value="ENSP00000463706.1"/>
    <property type="gene ID" value="ENSG00000102878.18"/>
</dbReference>
<dbReference type="GeneID" id="3299"/>
<dbReference type="KEGG" id="hsa:3299"/>
<dbReference type="MANE-Select" id="ENST00000521374.6">
    <property type="protein sequence ID" value="ENSP00000430947.2"/>
    <property type="RefSeq nucleotide sequence ID" value="NM_001374675.1"/>
    <property type="RefSeq protein sequence ID" value="NP_001361604.1"/>
</dbReference>
<dbReference type="UCSC" id="uc002erl.2">
    <molecule id="Q9ULV5-1"/>
    <property type="organism name" value="human"/>
</dbReference>
<dbReference type="AGR" id="HGNC:5227"/>
<dbReference type="CTD" id="3299"/>
<dbReference type="DisGeNET" id="3299"/>
<dbReference type="GeneCards" id="HSF4"/>
<dbReference type="HGNC" id="HGNC:5227">
    <property type="gene designation" value="HSF4"/>
</dbReference>
<dbReference type="HPA" id="ENSG00000102878">
    <property type="expression patterns" value="Low tissue specificity"/>
</dbReference>
<dbReference type="MalaCards" id="HSF4"/>
<dbReference type="MIM" id="116800">
    <property type="type" value="phenotype"/>
</dbReference>
<dbReference type="MIM" id="602438">
    <property type="type" value="gene"/>
</dbReference>
<dbReference type="neXtProt" id="NX_Q9ULV5"/>
<dbReference type="OpenTargets" id="ENSG00000102878"/>
<dbReference type="Orphanet" id="441452">
    <property type="disease" value="Early-onset lamellar cataract"/>
</dbReference>
<dbReference type="Orphanet" id="98994">
    <property type="disease" value="Total early-onset cataract"/>
</dbReference>
<dbReference type="PharmGKB" id="PA29496"/>
<dbReference type="VEuPathDB" id="HostDB:ENSG00000102878"/>
<dbReference type="eggNOG" id="KOG0627">
    <property type="taxonomic scope" value="Eukaryota"/>
</dbReference>
<dbReference type="GeneTree" id="ENSGT00940000158063"/>
<dbReference type="InParanoid" id="Q9ULV5"/>
<dbReference type="OMA" id="ACPGKDV"/>
<dbReference type="OrthoDB" id="60033at2759"/>
<dbReference type="PAN-GO" id="Q9ULV5">
    <property type="GO annotations" value="4 GO annotations based on evolutionary models"/>
</dbReference>
<dbReference type="PhylomeDB" id="Q9ULV5"/>
<dbReference type="TreeFam" id="TF330401"/>
<dbReference type="PathwayCommons" id="Q9ULV5"/>
<dbReference type="SignaLink" id="Q9ULV5"/>
<dbReference type="SIGNOR" id="Q9ULV5"/>
<dbReference type="BioGRID-ORCS" id="3299">
    <property type="hits" value="15 hits in 1179 CRISPR screens"/>
</dbReference>
<dbReference type="ChiTaRS" id="HSF4">
    <property type="organism name" value="human"/>
</dbReference>
<dbReference type="GeneWiki" id="HSF4"/>
<dbReference type="GenomeRNAi" id="3299"/>
<dbReference type="Pharos" id="Q9ULV5">
    <property type="development level" value="Tbio"/>
</dbReference>
<dbReference type="PRO" id="PR:Q9ULV5"/>
<dbReference type="Proteomes" id="UP000005640">
    <property type="component" value="Chromosome 16"/>
</dbReference>
<dbReference type="RNAct" id="Q9ULV5">
    <property type="molecule type" value="protein"/>
</dbReference>
<dbReference type="Bgee" id="ENSG00000102878">
    <property type="expression patterns" value="Expressed in right hemisphere of cerebellum and 117 other cell types or tissues"/>
</dbReference>
<dbReference type="ExpressionAtlas" id="Q9ULV5">
    <property type="expression patterns" value="baseline and differential"/>
</dbReference>
<dbReference type="GO" id="GO:0000785">
    <property type="term" value="C:chromatin"/>
    <property type="evidence" value="ECO:0000314"/>
    <property type="project" value="ARUK-UCL"/>
</dbReference>
<dbReference type="GO" id="GO:0016607">
    <property type="term" value="C:nuclear speck"/>
    <property type="evidence" value="ECO:0000314"/>
    <property type="project" value="HPA"/>
</dbReference>
<dbReference type="GO" id="GO:0000981">
    <property type="term" value="F:DNA-binding transcription factor activity, RNA polymerase II-specific"/>
    <property type="evidence" value="ECO:0000314"/>
    <property type="project" value="ARUK-UCL"/>
</dbReference>
<dbReference type="GO" id="GO:0042802">
    <property type="term" value="F:identical protein binding"/>
    <property type="evidence" value="ECO:0007669"/>
    <property type="project" value="Ensembl"/>
</dbReference>
<dbReference type="GO" id="GO:0019903">
    <property type="term" value="F:protein phosphatase binding"/>
    <property type="evidence" value="ECO:0000353"/>
    <property type="project" value="UniProtKB"/>
</dbReference>
<dbReference type="GO" id="GO:0000978">
    <property type="term" value="F:RNA polymerase II cis-regulatory region sequence-specific DNA binding"/>
    <property type="evidence" value="ECO:0000314"/>
    <property type="project" value="ARUK-UCL"/>
</dbReference>
<dbReference type="GO" id="GO:1990837">
    <property type="term" value="F:sequence-specific double-stranded DNA binding"/>
    <property type="evidence" value="ECO:0000314"/>
    <property type="project" value="ARUK-UCL"/>
</dbReference>
<dbReference type="GO" id="GO:0070306">
    <property type="term" value="P:lens fiber cell differentiation"/>
    <property type="evidence" value="ECO:0000250"/>
    <property type="project" value="UniProtKB"/>
</dbReference>
<dbReference type="GO" id="GO:0000122">
    <property type="term" value="P:negative regulation of transcription by RNA polymerase II"/>
    <property type="evidence" value="ECO:0000314"/>
    <property type="project" value="ARUK-UCL"/>
</dbReference>
<dbReference type="FunFam" id="1.10.10.10:FF:000027">
    <property type="entry name" value="Heat shock transcription factor 1"/>
    <property type="match status" value="1"/>
</dbReference>
<dbReference type="Gene3D" id="1.10.10.10">
    <property type="entry name" value="Winged helix-like DNA-binding domain superfamily/Winged helix DNA-binding domain"/>
    <property type="match status" value="1"/>
</dbReference>
<dbReference type="InterPro" id="IPR000232">
    <property type="entry name" value="HSF_DNA-bd"/>
</dbReference>
<dbReference type="InterPro" id="IPR036388">
    <property type="entry name" value="WH-like_DNA-bd_sf"/>
</dbReference>
<dbReference type="InterPro" id="IPR036390">
    <property type="entry name" value="WH_DNA-bd_sf"/>
</dbReference>
<dbReference type="PANTHER" id="PTHR10015:SF213">
    <property type="entry name" value="HEAT SHOCK FACTOR PROTEIN 4"/>
    <property type="match status" value="1"/>
</dbReference>
<dbReference type="PANTHER" id="PTHR10015">
    <property type="entry name" value="HEAT SHOCK TRANSCRIPTION FACTOR"/>
    <property type="match status" value="1"/>
</dbReference>
<dbReference type="Pfam" id="PF00447">
    <property type="entry name" value="HSF_DNA-bind"/>
    <property type="match status" value="1"/>
</dbReference>
<dbReference type="PRINTS" id="PR00056">
    <property type="entry name" value="HSFDOMAIN"/>
</dbReference>
<dbReference type="SMART" id="SM00415">
    <property type="entry name" value="HSF"/>
    <property type="match status" value="1"/>
</dbReference>
<dbReference type="SUPFAM" id="SSF46785">
    <property type="entry name" value="Winged helix' DNA-binding domain"/>
    <property type="match status" value="1"/>
</dbReference>
<dbReference type="PROSITE" id="PS00434">
    <property type="entry name" value="HSF_DOMAIN"/>
    <property type="match status" value="1"/>
</dbReference>
<protein>
    <recommendedName>
        <fullName>Heat shock factor protein 4</fullName>
        <shortName>HSF 4</shortName>
        <shortName>hHSF4</shortName>
    </recommendedName>
    <alternativeName>
        <fullName>Heat shock transcription factor 4</fullName>
        <shortName>HSTF 4</shortName>
    </alternativeName>
</protein>
<accession>Q9ULV5</accession>
<accession>Q99472</accession>
<accession>Q9ULV6</accession>